<dbReference type="EC" id="3.6.4.13"/>
<dbReference type="EMBL" id="AAHF01000008">
    <property type="protein sequence ID" value="EAL87219.2"/>
    <property type="molecule type" value="Genomic_DNA"/>
</dbReference>
<dbReference type="RefSeq" id="XP_749257.2">
    <property type="nucleotide sequence ID" value="XM_744164.2"/>
</dbReference>
<dbReference type="SMR" id="Q4WIN6"/>
<dbReference type="FunCoup" id="Q4WIN6">
    <property type="interactions" value="760"/>
</dbReference>
<dbReference type="STRING" id="330879.Q4WIN6"/>
<dbReference type="EnsemblFungi" id="EAL87219">
    <property type="protein sequence ID" value="EAL87219"/>
    <property type="gene ID" value="AFUA_2G01210"/>
</dbReference>
<dbReference type="GeneID" id="3506980"/>
<dbReference type="KEGG" id="afm:AFUA_2G01210"/>
<dbReference type="VEuPathDB" id="FungiDB:Afu2g01210"/>
<dbReference type="eggNOG" id="KOG0332">
    <property type="taxonomic scope" value="Eukaryota"/>
</dbReference>
<dbReference type="HOGENOM" id="CLU_003041_1_0_1"/>
<dbReference type="InParanoid" id="Q4WIN6"/>
<dbReference type="OMA" id="IAAETRW"/>
<dbReference type="OrthoDB" id="10265785at2759"/>
<dbReference type="Proteomes" id="UP000002530">
    <property type="component" value="Chromosome 2"/>
</dbReference>
<dbReference type="GO" id="GO:0005934">
    <property type="term" value="C:cellular bud tip"/>
    <property type="evidence" value="ECO:0007669"/>
    <property type="project" value="EnsemblFungi"/>
</dbReference>
<dbReference type="GO" id="GO:0010494">
    <property type="term" value="C:cytoplasmic stress granule"/>
    <property type="evidence" value="ECO:0000318"/>
    <property type="project" value="GO_Central"/>
</dbReference>
<dbReference type="GO" id="GO:0031965">
    <property type="term" value="C:nuclear membrane"/>
    <property type="evidence" value="ECO:0007669"/>
    <property type="project" value="UniProtKB-SubCell"/>
</dbReference>
<dbReference type="GO" id="GO:0044614">
    <property type="term" value="C:nuclear pore cytoplasmic filaments"/>
    <property type="evidence" value="ECO:0007669"/>
    <property type="project" value="EnsemblFungi"/>
</dbReference>
<dbReference type="GO" id="GO:0005634">
    <property type="term" value="C:nucleus"/>
    <property type="evidence" value="ECO:0000318"/>
    <property type="project" value="GO_Central"/>
</dbReference>
<dbReference type="GO" id="GO:0005524">
    <property type="term" value="F:ATP binding"/>
    <property type="evidence" value="ECO:0007669"/>
    <property type="project" value="UniProtKB-KW"/>
</dbReference>
<dbReference type="GO" id="GO:0016887">
    <property type="term" value="F:ATP hydrolysis activity"/>
    <property type="evidence" value="ECO:0007669"/>
    <property type="project" value="RHEA"/>
</dbReference>
<dbReference type="GO" id="GO:0000822">
    <property type="term" value="F:inositol hexakisphosphate binding"/>
    <property type="evidence" value="ECO:0007669"/>
    <property type="project" value="EnsemblFungi"/>
</dbReference>
<dbReference type="GO" id="GO:0003729">
    <property type="term" value="F:mRNA binding"/>
    <property type="evidence" value="ECO:0000318"/>
    <property type="project" value="GO_Central"/>
</dbReference>
<dbReference type="GO" id="GO:0003724">
    <property type="term" value="F:RNA helicase activity"/>
    <property type="evidence" value="ECO:0000318"/>
    <property type="project" value="GO_Central"/>
</dbReference>
<dbReference type="GO" id="GO:0016973">
    <property type="term" value="P:poly(A)+ mRNA export from nucleus"/>
    <property type="evidence" value="ECO:0000318"/>
    <property type="project" value="GO_Central"/>
</dbReference>
<dbReference type="GO" id="GO:0015031">
    <property type="term" value="P:protein transport"/>
    <property type="evidence" value="ECO:0007669"/>
    <property type="project" value="UniProtKB-KW"/>
</dbReference>
<dbReference type="GO" id="GO:0006415">
    <property type="term" value="P:translational termination"/>
    <property type="evidence" value="ECO:0007669"/>
    <property type="project" value="EnsemblFungi"/>
</dbReference>
<dbReference type="GO" id="GO:0006409">
    <property type="term" value="P:tRNA export from nucleus"/>
    <property type="evidence" value="ECO:0007669"/>
    <property type="project" value="EnsemblFungi"/>
</dbReference>
<dbReference type="CDD" id="cd17963">
    <property type="entry name" value="DEADc_DDX19_DDX25"/>
    <property type="match status" value="1"/>
</dbReference>
<dbReference type="CDD" id="cd18787">
    <property type="entry name" value="SF2_C_DEAD"/>
    <property type="match status" value="1"/>
</dbReference>
<dbReference type="FunFam" id="3.40.50.300:FF:000849">
    <property type="entry name" value="ATP-dependent RNA helicase DBP5"/>
    <property type="match status" value="1"/>
</dbReference>
<dbReference type="Gene3D" id="3.40.50.300">
    <property type="entry name" value="P-loop containing nucleotide triphosphate hydrolases"/>
    <property type="match status" value="2"/>
</dbReference>
<dbReference type="InterPro" id="IPR011545">
    <property type="entry name" value="DEAD/DEAH_box_helicase_dom"/>
</dbReference>
<dbReference type="InterPro" id="IPR014001">
    <property type="entry name" value="Helicase_ATP-bd"/>
</dbReference>
<dbReference type="InterPro" id="IPR001650">
    <property type="entry name" value="Helicase_C-like"/>
</dbReference>
<dbReference type="InterPro" id="IPR027417">
    <property type="entry name" value="P-loop_NTPase"/>
</dbReference>
<dbReference type="InterPro" id="IPR000629">
    <property type="entry name" value="RNA-helicase_DEAD-box_CS"/>
</dbReference>
<dbReference type="InterPro" id="IPR014014">
    <property type="entry name" value="RNA_helicase_DEAD_Q_motif"/>
</dbReference>
<dbReference type="PANTHER" id="PTHR47958">
    <property type="entry name" value="ATP-DEPENDENT RNA HELICASE DBP3"/>
    <property type="match status" value="1"/>
</dbReference>
<dbReference type="Pfam" id="PF00270">
    <property type="entry name" value="DEAD"/>
    <property type="match status" value="1"/>
</dbReference>
<dbReference type="Pfam" id="PF00271">
    <property type="entry name" value="Helicase_C"/>
    <property type="match status" value="1"/>
</dbReference>
<dbReference type="SMART" id="SM00487">
    <property type="entry name" value="DEXDc"/>
    <property type="match status" value="1"/>
</dbReference>
<dbReference type="SMART" id="SM00490">
    <property type="entry name" value="HELICc"/>
    <property type="match status" value="1"/>
</dbReference>
<dbReference type="SUPFAM" id="SSF52540">
    <property type="entry name" value="P-loop containing nucleoside triphosphate hydrolases"/>
    <property type="match status" value="1"/>
</dbReference>
<dbReference type="PROSITE" id="PS00039">
    <property type="entry name" value="DEAD_ATP_HELICASE"/>
    <property type="match status" value="1"/>
</dbReference>
<dbReference type="PROSITE" id="PS51192">
    <property type="entry name" value="HELICASE_ATP_BIND_1"/>
    <property type="match status" value="1"/>
</dbReference>
<dbReference type="PROSITE" id="PS51194">
    <property type="entry name" value="HELICASE_CTER"/>
    <property type="match status" value="1"/>
</dbReference>
<dbReference type="PROSITE" id="PS51195">
    <property type="entry name" value="Q_MOTIF"/>
    <property type="match status" value="1"/>
</dbReference>
<gene>
    <name type="primary">dbp5</name>
    <name type="ORF">AFUA_2G01210</name>
</gene>
<sequence>MASEQPVEAAPTGGSLADRITKPDESNTSETPAPIGDQTDGAPAQLGGSDLHEPEYNVEVKLSDLQADPNNPLYSVKNFEDLGLDPRILKGLSSMNFRKPSKIQERALPLLLNNPPKNLVGQSQSGTGKTAAFVLNALSRVDLSTEQMQKTPQALILAPTRELARQILGVVQVMGQFVDGLIIGAAVPTDRDSRPKRLECSIVVGTPGTVGDMIKRRTFIPNKLKVLVLDEADNMLDQQGLGDQCIRVKALLPRDIQVVLFSATFPEHVHQYASKFAPNANEITLQHEELTVEGIKQLYLDCADGEDKYRTLVQLYGLLTVGSSIIFVQTRAAAQEIERRMTAEGHTVVSLTGERDPSVRDAIIDQFRRGEAKVLIATNVLARGIDVSTVSMVINYDIPELHQPNVPGRQADFQTYLHRIGRTGRFGRVGVSISFVSNREEWEMLNQIQTYFNCEIQRVDTKDWDEVEDIIKKTIKNSRANPKFAGGKD</sequence>
<reference key="1">
    <citation type="journal article" date="2005" name="Nature">
        <title>Genomic sequence of the pathogenic and allergenic filamentous fungus Aspergillus fumigatus.</title>
        <authorList>
            <person name="Nierman W.C."/>
            <person name="Pain A."/>
            <person name="Anderson M.J."/>
            <person name="Wortman J.R."/>
            <person name="Kim H.S."/>
            <person name="Arroyo J."/>
            <person name="Berriman M."/>
            <person name="Abe K."/>
            <person name="Archer D.B."/>
            <person name="Bermejo C."/>
            <person name="Bennett J.W."/>
            <person name="Bowyer P."/>
            <person name="Chen D."/>
            <person name="Collins M."/>
            <person name="Coulsen R."/>
            <person name="Davies R."/>
            <person name="Dyer P.S."/>
            <person name="Farman M.L."/>
            <person name="Fedorova N."/>
            <person name="Fedorova N.D."/>
            <person name="Feldblyum T.V."/>
            <person name="Fischer R."/>
            <person name="Fosker N."/>
            <person name="Fraser A."/>
            <person name="Garcia J.L."/>
            <person name="Garcia M.J."/>
            <person name="Goble A."/>
            <person name="Goldman G.H."/>
            <person name="Gomi K."/>
            <person name="Griffith-Jones S."/>
            <person name="Gwilliam R."/>
            <person name="Haas B.J."/>
            <person name="Haas H."/>
            <person name="Harris D.E."/>
            <person name="Horiuchi H."/>
            <person name="Huang J."/>
            <person name="Humphray S."/>
            <person name="Jimenez J."/>
            <person name="Keller N."/>
            <person name="Khouri H."/>
            <person name="Kitamoto K."/>
            <person name="Kobayashi T."/>
            <person name="Konzack S."/>
            <person name="Kulkarni R."/>
            <person name="Kumagai T."/>
            <person name="Lafton A."/>
            <person name="Latge J.-P."/>
            <person name="Li W."/>
            <person name="Lord A."/>
            <person name="Lu C."/>
            <person name="Majoros W.H."/>
            <person name="May G.S."/>
            <person name="Miller B.L."/>
            <person name="Mohamoud Y."/>
            <person name="Molina M."/>
            <person name="Monod M."/>
            <person name="Mouyna I."/>
            <person name="Mulligan S."/>
            <person name="Murphy L.D."/>
            <person name="O'Neil S."/>
            <person name="Paulsen I."/>
            <person name="Penalva M.A."/>
            <person name="Pertea M."/>
            <person name="Price C."/>
            <person name="Pritchard B.L."/>
            <person name="Quail M.A."/>
            <person name="Rabbinowitsch E."/>
            <person name="Rawlins N."/>
            <person name="Rajandream M.A."/>
            <person name="Reichard U."/>
            <person name="Renauld H."/>
            <person name="Robson G.D."/>
            <person name="Rodriguez de Cordoba S."/>
            <person name="Rodriguez-Pena J.M."/>
            <person name="Ronning C.M."/>
            <person name="Rutter S."/>
            <person name="Salzberg S.L."/>
            <person name="Sanchez M."/>
            <person name="Sanchez-Ferrero J.C."/>
            <person name="Saunders D."/>
            <person name="Seeger K."/>
            <person name="Squares R."/>
            <person name="Squares S."/>
            <person name="Takeuchi M."/>
            <person name="Tekaia F."/>
            <person name="Turner G."/>
            <person name="Vazquez de Aldana C.R."/>
            <person name="Weidman J."/>
            <person name="White O."/>
            <person name="Woodward J.R."/>
            <person name="Yu J.-H."/>
            <person name="Fraser C.M."/>
            <person name="Galagan J.E."/>
            <person name="Asai K."/>
            <person name="Machida M."/>
            <person name="Hall N."/>
            <person name="Barrell B.G."/>
            <person name="Denning D.W."/>
        </authorList>
    </citation>
    <scope>NUCLEOTIDE SEQUENCE [LARGE SCALE GENOMIC DNA]</scope>
    <source>
        <strain>ATCC MYA-4609 / CBS 101355 / FGSC A1100 / Af293</strain>
    </source>
</reference>
<protein>
    <recommendedName>
        <fullName>ATP-dependent RNA helicase dbp5</fullName>
        <ecNumber>3.6.4.13</ecNumber>
    </recommendedName>
</protein>
<organism>
    <name type="scientific">Aspergillus fumigatus (strain ATCC MYA-4609 / CBS 101355 / FGSC A1100 / Af293)</name>
    <name type="common">Neosartorya fumigata</name>
    <dbReference type="NCBI Taxonomy" id="330879"/>
    <lineage>
        <taxon>Eukaryota</taxon>
        <taxon>Fungi</taxon>
        <taxon>Dikarya</taxon>
        <taxon>Ascomycota</taxon>
        <taxon>Pezizomycotina</taxon>
        <taxon>Eurotiomycetes</taxon>
        <taxon>Eurotiomycetidae</taxon>
        <taxon>Eurotiales</taxon>
        <taxon>Aspergillaceae</taxon>
        <taxon>Aspergillus</taxon>
        <taxon>Aspergillus subgen. Fumigati</taxon>
    </lineage>
</organism>
<evidence type="ECO:0000250" key="1"/>
<evidence type="ECO:0000255" key="2">
    <source>
        <dbReference type="PROSITE-ProRule" id="PRU00541"/>
    </source>
</evidence>
<evidence type="ECO:0000255" key="3">
    <source>
        <dbReference type="PROSITE-ProRule" id="PRU00542"/>
    </source>
</evidence>
<evidence type="ECO:0000256" key="4">
    <source>
        <dbReference type="SAM" id="MobiDB-lite"/>
    </source>
</evidence>
<evidence type="ECO:0000305" key="5"/>
<feature type="chain" id="PRO_0000232217" description="ATP-dependent RNA helicase dbp5">
    <location>
        <begin position="1"/>
        <end position="489"/>
    </location>
</feature>
<feature type="domain" description="Helicase ATP-binding" evidence="2">
    <location>
        <begin position="110"/>
        <end position="283"/>
    </location>
</feature>
<feature type="domain" description="Helicase C-terminal" evidence="3">
    <location>
        <begin position="311"/>
        <end position="467"/>
    </location>
</feature>
<feature type="region of interest" description="Disordered" evidence="4">
    <location>
        <begin position="1"/>
        <end position="51"/>
    </location>
</feature>
<feature type="short sequence motif" description="Q motif">
    <location>
        <begin position="77"/>
        <end position="105"/>
    </location>
</feature>
<feature type="short sequence motif" description="DEAD box">
    <location>
        <begin position="230"/>
        <end position="233"/>
    </location>
</feature>
<feature type="binding site" evidence="2">
    <location>
        <begin position="123"/>
        <end position="130"/>
    </location>
    <ligand>
        <name>ATP</name>
        <dbReference type="ChEBI" id="CHEBI:30616"/>
    </ligand>
</feature>
<proteinExistence type="inferred from homology"/>
<comment type="function">
    <text evidence="1">ATP-dependent RNA helicase associated with the nuclear pore complex and essential for mRNA export from the nucleus. May participate in a terminal step of mRNA export through the removal of proteins that accompany mRNA through the nucleopore complex. May also be involved in early transcription (By similarity).</text>
</comment>
<comment type="catalytic activity">
    <reaction>
        <text>ATP + H2O = ADP + phosphate + H(+)</text>
        <dbReference type="Rhea" id="RHEA:13065"/>
        <dbReference type="ChEBI" id="CHEBI:15377"/>
        <dbReference type="ChEBI" id="CHEBI:15378"/>
        <dbReference type="ChEBI" id="CHEBI:30616"/>
        <dbReference type="ChEBI" id="CHEBI:43474"/>
        <dbReference type="ChEBI" id="CHEBI:456216"/>
        <dbReference type="EC" id="3.6.4.13"/>
    </reaction>
</comment>
<comment type="subunit">
    <text evidence="1">Associates with the nuclear pore complex.</text>
</comment>
<comment type="subcellular location">
    <subcellularLocation>
        <location evidence="1">Cytoplasm</location>
    </subcellularLocation>
    <subcellularLocation>
        <location>Nucleus</location>
        <location>Nuclear pore complex</location>
    </subcellularLocation>
    <subcellularLocation>
        <location evidence="1">Nucleus membrane</location>
        <topology evidence="1">Peripheral membrane protein</topology>
        <orientation evidence="1">Cytoplasmic side</orientation>
    </subcellularLocation>
    <text evidence="1">Nuclear pore complex cytoplasmic fibrils.</text>
</comment>
<comment type="domain">
    <text>The Q motif is unique to and characteristic of the DEAD box family of RNA helicases and controls ATP binding and hydrolysis.</text>
</comment>
<comment type="similarity">
    <text evidence="5">Belongs to the DEAD box helicase family. DDX19/DBP5 subfamily.</text>
</comment>
<name>DBP5_ASPFU</name>
<keyword id="KW-0067">ATP-binding</keyword>
<keyword id="KW-0963">Cytoplasm</keyword>
<keyword id="KW-0347">Helicase</keyword>
<keyword id="KW-0378">Hydrolase</keyword>
<keyword id="KW-0472">Membrane</keyword>
<keyword id="KW-0509">mRNA transport</keyword>
<keyword id="KW-0906">Nuclear pore complex</keyword>
<keyword id="KW-0547">Nucleotide-binding</keyword>
<keyword id="KW-0539">Nucleus</keyword>
<keyword id="KW-0653">Protein transport</keyword>
<keyword id="KW-1185">Reference proteome</keyword>
<keyword id="KW-0694">RNA-binding</keyword>
<keyword id="KW-0811">Translocation</keyword>
<keyword id="KW-0813">Transport</keyword>
<accession>Q4WIN6</accession>